<accession>Q90YR6</accession>
<proteinExistence type="evidence at transcript level"/>
<evidence type="ECO:0000250" key="1"/>
<evidence type="ECO:0000250" key="2">
    <source>
        <dbReference type="UniProtKB" id="P62241"/>
    </source>
</evidence>
<evidence type="ECO:0000256" key="3">
    <source>
        <dbReference type="SAM" id="MobiDB-lite"/>
    </source>
</evidence>
<evidence type="ECO:0000305" key="4"/>
<dbReference type="EMBL" id="AF402816">
    <property type="protein sequence ID" value="AAK95190.1"/>
    <property type="molecule type" value="mRNA"/>
</dbReference>
<dbReference type="RefSeq" id="NP_001187073.1">
    <property type="nucleotide sequence ID" value="NM_001200144.1"/>
</dbReference>
<dbReference type="SMR" id="Q90YR6"/>
<dbReference type="STRING" id="7998.ENSIPUP00000010887"/>
<dbReference type="GeneID" id="100304562"/>
<dbReference type="KEGG" id="ipu:100304562"/>
<dbReference type="CTD" id="407690"/>
<dbReference type="OMA" id="QRPHYRK"/>
<dbReference type="OrthoDB" id="1703270at2759"/>
<dbReference type="Proteomes" id="UP000221080">
    <property type="component" value="Chromosome 17"/>
</dbReference>
<dbReference type="GO" id="GO:0005737">
    <property type="term" value="C:cytoplasm"/>
    <property type="evidence" value="ECO:0007669"/>
    <property type="project" value="UniProtKB-SubCell"/>
</dbReference>
<dbReference type="GO" id="GO:1990904">
    <property type="term" value="C:ribonucleoprotein complex"/>
    <property type="evidence" value="ECO:0007669"/>
    <property type="project" value="UniProtKB-KW"/>
</dbReference>
<dbReference type="GO" id="GO:0005840">
    <property type="term" value="C:ribosome"/>
    <property type="evidence" value="ECO:0007669"/>
    <property type="project" value="UniProtKB-KW"/>
</dbReference>
<dbReference type="GO" id="GO:0003735">
    <property type="term" value="F:structural constituent of ribosome"/>
    <property type="evidence" value="ECO:0007669"/>
    <property type="project" value="InterPro"/>
</dbReference>
<dbReference type="GO" id="GO:0006412">
    <property type="term" value="P:translation"/>
    <property type="evidence" value="ECO:0007669"/>
    <property type="project" value="InterPro"/>
</dbReference>
<dbReference type="CDD" id="cd11380">
    <property type="entry name" value="Ribosomal_S8e_like"/>
    <property type="match status" value="1"/>
</dbReference>
<dbReference type="FunFam" id="1.10.168.20:FF:000001">
    <property type="entry name" value="40S ribosomal protein S8"/>
    <property type="match status" value="1"/>
</dbReference>
<dbReference type="FunFam" id="3.10.290.70:FF:000004">
    <property type="entry name" value="40S ribosomal protein S8"/>
    <property type="match status" value="1"/>
</dbReference>
<dbReference type="FunFam" id="3.10.290.70:FF:000005">
    <property type="entry name" value="40S ribosomal protein S8"/>
    <property type="match status" value="1"/>
</dbReference>
<dbReference type="Gene3D" id="3.10.290.70">
    <property type="match status" value="1"/>
</dbReference>
<dbReference type="Gene3D" id="1.10.168.20">
    <property type="entry name" value="Ribosomal protein S8e, subdomain"/>
    <property type="match status" value="1"/>
</dbReference>
<dbReference type="InterPro" id="IPR001047">
    <property type="entry name" value="Ribosomal_eS8"/>
</dbReference>
<dbReference type="InterPro" id="IPR018283">
    <property type="entry name" value="Ribosomal_eS8_CS"/>
</dbReference>
<dbReference type="InterPro" id="IPR042563">
    <property type="entry name" value="Ribosomal_protein_eS8_euk"/>
</dbReference>
<dbReference type="InterPro" id="IPR022309">
    <property type="entry name" value="Ribosomal_Se8/biogenesis_NSA2"/>
</dbReference>
<dbReference type="NCBIfam" id="TIGR00307">
    <property type="entry name" value="eS8"/>
    <property type="match status" value="1"/>
</dbReference>
<dbReference type="PANTHER" id="PTHR10394">
    <property type="entry name" value="40S RIBOSOMAL PROTEIN S8"/>
    <property type="match status" value="1"/>
</dbReference>
<dbReference type="Pfam" id="PF01201">
    <property type="entry name" value="Ribosomal_S8e"/>
    <property type="match status" value="1"/>
</dbReference>
<dbReference type="PROSITE" id="PS01193">
    <property type="entry name" value="RIBOSOMAL_S8E"/>
    <property type="match status" value="1"/>
</dbReference>
<feature type="initiator methionine" description="Removed" evidence="1">
    <location>
        <position position="1"/>
    </location>
</feature>
<feature type="chain" id="PRO_0000122244" description="Small ribosomal subunit protein eS8">
    <location>
        <begin position="2"/>
        <end position="208"/>
    </location>
</feature>
<feature type="region of interest" description="Disordered" evidence="3">
    <location>
        <begin position="1"/>
        <end position="40"/>
    </location>
</feature>
<feature type="compositionally biased region" description="Basic residues" evidence="3">
    <location>
        <begin position="8"/>
        <end position="26"/>
    </location>
</feature>
<comment type="function">
    <text evidence="2">Component of the small ribosomal subunit. The ribosome is a large ribonucleoprotein complex responsible for the synthesis of proteins in the cell.</text>
</comment>
<comment type="subunit">
    <text evidence="2">Component of the small ribosomal subunit.</text>
</comment>
<comment type="subcellular location">
    <subcellularLocation>
        <location evidence="2">Cytoplasm</location>
    </subcellularLocation>
</comment>
<comment type="similarity">
    <text evidence="4">Belongs to the eukaryotic ribosomal protein eS8 family.</text>
</comment>
<organism>
    <name type="scientific">Ictalurus punctatus</name>
    <name type="common">Channel catfish</name>
    <name type="synonym">Silurus punctatus</name>
    <dbReference type="NCBI Taxonomy" id="7998"/>
    <lineage>
        <taxon>Eukaryota</taxon>
        <taxon>Metazoa</taxon>
        <taxon>Chordata</taxon>
        <taxon>Craniata</taxon>
        <taxon>Vertebrata</taxon>
        <taxon>Euteleostomi</taxon>
        <taxon>Actinopterygii</taxon>
        <taxon>Neopterygii</taxon>
        <taxon>Teleostei</taxon>
        <taxon>Ostariophysi</taxon>
        <taxon>Siluriformes</taxon>
        <taxon>Ictaluridae</taxon>
        <taxon>Ictalurus</taxon>
    </lineage>
</organism>
<reference key="1">
    <citation type="journal article" date="2002" name="Gene">
        <title>Translational machinery of channel catfish: I. A transcriptomic approach to the analysis of 32 40S ribosomal protein genes and their expression.</title>
        <authorList>
            <person name="Karsi A."/>
            <person name="Patterson A."/>
            <person name="Feng J."/>
            <person name="Liu Z.-J."/>
        </authorList>
    </citation>
    <scope>NUCLEOTIDE SEQUENCE [MRNA]</scope>
</reference>
<protein>
    <recommendedName>
        <fullName evidence="4">Small ribosomal subunit protein eS8</fullName>
    </recommendedName>
    <alternativeName>
        <fullName>40S ribosomal protein S8</fullName>
    </alternativeName>
</protein>
<keyword id="KW-0963">Cytoplasm</keyword>
<keyword id="KW-0687">Ribonucleoprotein</keyword>
<keyword id="KW-0689">Ribosomal protein</keyword>
<sequence>MGISRDNWHKRRKTGGKRKPVHKKRKYELGRPPSNTKLGPKRIHTVRVRGGNKKYRALRLDVGNFSWGSECCTRKTRIIDVVYNASNNELVRTKTLVKNCVILVDSAPFRQWYESHYALPLGRKKGAKLTPEEEDILNKKRSKKVQKKFDKRRKNSKISPLLDEQFQQGKLLACISSRPGQCGRADGYVLEGKELEFYLRKIKAKKGK</sequence>
<gene>
    <name type="primary">rps8</name>
</gene>
<name>RS8_ICTPU</name>